<comment type="function">
    <text evidence="3">Oxidosqualene cyclase converting oxidosqualene into beta-amyrin, generating five rings and eight asymmetric centers in a single transformation. Required for the production of soyasaponins and glycyrrhizin.</text>
</comment>
<comment type="catalytic activity">
    <reaction evidence="3">
        <text>(S)-2,3-epoxysqualene = beta-amyrin</text>
        <dbReference type="Rhea" id="RHEA:31007"/>
        <dbReference type="ChEBI" id="CHEBI:10352"/>
        <dbReference type="ChEBI" id="CHEBI:15441"/>
        <dbReference type="EC" id="5.4.99.39"/>
    </reaction>
    <physiologicalReaction direction="left-to-right" evidence="3">
        <dbReference type="Rhea" id="RHEA:31008"/>
    </physiologicalReaction>
</comment>
<comment type="pathway">
    <text evidence="3">Secondary metabolite biosynthesis; terpenoid biosynthesis.</text>
</comment>
<comment type="tissue specificity">
    <text evidence="4">Highly expressed in thickened roots and root nodules. Detected in roots, hypocotyls and cotyledons of young seedlings.</text>
</comment>
<comment type="developmental stage">
    <text evidence="4">Peak of expression 2 days after germination. High levels of expression when aerial parts are growing.</text>
</comment>
<comment type="induction">
    <text evidence="4">Up-regulated by methyl jasmonate (MeJA) and down-regulated by gibberellin A3 (GA3).</text>
</comment>
<comment type="similarity">
    <text evidence="6">Belongs to the terpene cyclase/mutase family.</text>
</comment>
<gene>
    <name evidence="5" type="primary">bAS1</name>
</gene>
<evidence type="ECO:0000250" key="1">
    <source>
        <dbReference type="UniProtKB" id="P48449"/>
    </source>
</evidence>
<evidence type="ECO:0000255" key="2"/>
<evidence type="ECO:0000269" key="3">
    <source>
    </source>
</evidence>
<evidence type="ECO:0000269" key="4">
    <source>
    </source>
</evidence>
<evidence type="ECO:0000303" key="5">
    <source>
    </source>
</evidence>
<evidence type="ECO:0000305" key="6"/>
<organism>
    <name type="scientific">Glycyrrhiza glabra</name>
    <name type="common">Licorice</name>
    <dbReference type="NCBI Taxonomy" id="49827"/>
    <lineage>
        <taxon>Eukaryota</taxon>
        <taxon>Viridiplantae</taxon>
        <taxon>Streptophyta</taxon>
        <taxon>Embryophyta</taxon>
        <taxon>Tracheophyta</taxon>
        <taxon>Spermatophyta</taxon>
        <taxon>Magnoliopsida</taxon>
        <taxon>eudicotyledons</taxon>
        <taxon>Gunneridae</taxon>
        <taxon>Pentapetalae</taxon>
        <taxon>rosids</taxon>
        <taxon>fabids</taxon>
        <taxon>Fabales</taxon>
        <taxon>Fabaceae</taxon>
        <taxon>Papilionoideae</taxon>
        <taxon>50 kb inversion clade</taxon>
        <taxon>NPAAA clade</taxon>
        <taxon>Hologalegina</taxon>
        <taxon>IRL clade</taxon>
        <taxon>Galegeae</taxon>
        <taxon>Glycyrrhiza</taxon>
    </lineage>
</organism>
<feature type="chain" id="PRO_0000413968" description="Beta-amyrin synthase">
    <location>
        <begin position="1"/>
        <end position="765"/>
    </location>
</feature>
<feature type="repeat" description="PFTB 1" evidence="2">
    <location>
        <begin position="18"/>
        <end position="58"/>
    </location>
</feature>
<feature type="repeat" description="PFTB 2" evidence="2">
    <location>
        <begin position="98"/>
        <end position="140"/>
    </location>
</feature>
<feature type="repeat" description="PFTB 3" evidence="2">
    <location>
        <begin position="148"/>
        <end position="189"/>
    </location>
</feature>
<feature type="repeat" description="PFTB 4" evidence="2">
    <location>
        <begin position="401"/>
        <end position="437"/>
    </location>
</feature>
<feature type="repeat" description="PFTB 5" evidence="2">
    <location>
        <begin position="440"/>
        <end position="484"/>
    </location>
</feature>
<feature type="repeat" description="PFTB 6" evidence="2">
    <location>
        <begin position="514"/>
        <end position="556"/>
    </location>
</feature>
<feature type="repeat" description="PFTB 7" evidence="2">
    <location>
        <begin position="591"/>
        <end position="631"/>
    </location>
</feature>
<feature type="repeat" description="PFTB 8" evidence="2">
    <location>
        <begin position="640"/>
        <end position="681"/>
    </location>
</feature>
<feature type="repeat" description="PFTB 9" evidence="2">
    <location>
        <begin position="702"/>
        <end position="743"/>
    </location>
</feature>
<feature type="active site" description="Proton donor" evidence="1">
    <location>
        <position position="485"/>
    </location>
</feature>
<protein>
    <recommendedName>
        <fullName evidence="5">Beta-amyrin synthase</fullName>
        <shortName evidence="5">GgbAS1</shortName>
        <ecNumber evidence="3">5.4.99.39</ecNumber>
    </recommendedName>
</protein>
<sequence length="765" mass="87516">MWRLKIAEGGKDPYIYSTNNFVGRQTWEYDPDGGTPEERAQVDAARLHFYNNRFQVKPCGDLLWRFQILRENNFKQTIASVKIGDGEEITYEKATTAVRRAAHHLSALQTSDGHWPAQIAGPLFFLPPLVFCMYITGHLDSVFPEEYRKEILRYIYYHQNEDGGWGLHIEGHSTMFCTALNYICMRILGEGPDGGQDNACARARKWIHDHGGVTHIPSWGKTWLSILGVFDWCGSNPMPPEFWILPSFLPMHPAKMWCYCRLVYMPMSYLYGKRFVGPITPLILQLREELFTEPYEKVNWKKARHQCAKEDLYYPHPLLQDLIWDSLYLFTEPLLTRWPFNKLVREKALQVTMKHIHYEDETSRYITIGCVEKVLCMLACWVEDPNGDAFKKHLARVPDYLWVSEDGMTMQSFGSQEWDAGFAVQALLATNLVEEIAPTLAKGHDFIKKSQVRDNPSGDFKSMYRHISKGSWTFSDQDHGWQVSDCTAEGLKCCLLLSMLPPEIVGEKMEPERLYDSVNVLLSLQSKKGGLSAWEPAGAQEWLELLNPTEFFADIVVEHEYVECTGSAIQALVLFKKLYPGHRKKEIENFIANAVRFLEDTQTADGSWYGNWGVCFTYGSWFALGGLAAAGKTFANCAAIRKAVKFLLTTQREDGGWGESYLSSPKKIYVPLEGSRSNVVHTAWALMGLIHAGQAERDPAPLHRAAKLIINSQLEEGDWPQQEITGVFMKNCMLHYPMYRDIYPMWALAEYRRRVPLPSTPVCLT</sequence>
<dbReference type="EC" id="5.4.99.39" evidence="3"/>
<dbReference type="EMBL" id="AB037203">
    <property type="protein sequence ID" value="BAA89815.1"/>
    <property type="molecule type" value="mRNA"/>
</dbReference>
<dbReference type="SMR" id="Q9MB42"/>
<dbReference type="KEGG" id="ag:BAA89815"/>
<dbReference type="BRENDA" id="5.4.99.39">
    <property type="organism ID" value="2487"/>
</dbReference>
<dbReference type="UniPathway" id="UPA00213"/>
<dbReference type="GO" id="GO:0005811">
    <property type="term" value="C:lipid droplet"/>
    <property type="evidence" value="ECO:0007669"/>
    <property type="project" value="InterPro"/>
</dbReference>
<dbReference type="GO" id="GO:0042300">
    <property type="term" value="F:beta-amyrin synthase activity"/>
    <property type="evidence" value="ECO:0007669"/>
    <property type="project" value="UniProtKB-EC"/>
</dbReference>
<dbReference type="GO" id="GO:0016104">
    <property type="term" value="P:triterpenoid biosynthetic process"/>
    <property type="evidence" value="ECO:0007669"/>
    <property type="project" value="InterPro"/>
</dbReference>
<dbReference type="CDD" id="cd02892">
    <property type="entry name" value="SQCY_1"/>
    <property type="match status" value="1"/>
</dbReference>
<dbReference type="FunFam" id="1.50.10.20:FF:000011">
    <property type="entry name" value="Terpene cyclase/mutase family member"/>
    <property type="match status" value="1"/>
</dbReference>
<dbReference type="FunFam" id="1.50.10.20:FF:000064">
    <property type="entry name" value="Uncharacterized protein"/>
    <property type="match status" value="1"/>
</dbReference>
<dbReference type="Gene3D" id="1.50.10.20">
    <property type="match status" value="2"/>
</dbReference>
<dbReference type="InterPro" id="IPR032696">
    <property type="entry name" value="SQ_cyclase_C"/>
</dbReference>
<dbReference type="InterPro" id="IPR032697">
    <property type="entry name" value="SQ_cyclase_N"/>
</dbReference>
<dbReference type="InterPro" id="IPR018333">
    <property type="entry name" value="Squalene_cyclase"/>
</dbReference>
<dbReference type="InterPro" id="IPR002365">
    <property type="entry name" value="Terpene_synthase_CS"/>
</dbReference>
<dbReference type="InterPro" id="IPR008930">
    <property type="entry name" value="Terpenoid_cyclase/PrenylTrfase"/>
</dbReference>
<dbReference type="NCBIfam" id="TIGR01787">
    <property type="entry name" value="squalene_cyclas"/>
    <property type="match status" value="1"/>
</dbReference>
<dbReference type="PANTHER" id="PTHR11764:SF58">
    <property type="entry name" value="BETA-AMYRIN SYNTHASE-RELATED"/>
    <property type="match status" value="1"/>
</dbReference>
<dbReference type="PANTHER" id="PTHR11764">
    <property type="entry name" value="TERPENE CYCLASE/MUTASE FAMILY MEMBER"/>
    <property type="match status" value="1"/>
</dbReference>
<dbReference type="Pfam" id="PF13243">
    <property type="entry name" value="SQHop_cyclase_C"/>
    <property type="match status" value="1"/>
</dbReference>
<dbReference type="Pfam" id="PF13249">
    <property type="entry name" value="SQHop_cyclase_N"/>
    <property type="match status" value="1"/>
</dbReference>
<dbReference type="SFLD" id="SFLDG01016">
    <property type="entry name" value="Prenyltransferase_Like_2"/>
    <property type="match status" value="1"/>
</dbReference>
<dbReference type="SUPFAM" id="SSF48239">
    <property type="entry name" value="Terpenoid cyclases/Protein prenyltransferases"/>
    <property type="match status" value="2"/>
</dbReference>
<dbReference type="PROSITE" id="PS01074">
    <property type="entry name" value="TERPENE_SYNTHASES"/>
    <property type="match status" value="1"/>
</dbReference>
<reference key="1">
    <citation type="journal article" date="2001" name="Biol. Pharm. Bull.">
        <title>Cloning and characterization of a cDNA encoding beta-amyrin synthase involved in glycyrrhizin and soyasaponin biosyntheses in licorice.</title>
        <authorList>
            <person name="Hayashi H."/>
            <person name="Huang P."/>
            <person name="Kirakosyan A."/>
            <person name="Inoue K."/>
            <person name="Hiraoka N."/>
            <person name="Ikeshiro Y."/>
            <person name="Kushiro T."/>
            <person name="Shibuya M."/>
            <person name="Ebizuka Y."/>
        </authorList>
    </citation>
    <scope>NUCLEOTIDE SEQUENCE [MRNA]</scope>
    <scope>FUNCTION</scope>
    <scope>CATALYTIC ACTIVITY</scope>
    <scope>PATHWAY</scope>
</reference>
<reference key="2">
    <citation type="journal article" date="2004" name="Biol. Pharm. Bull.">
        <title>Differential expression of three oxidosqualene cyclase mRNAs in Glycyrrhiza glabra.</title>
        <authorList>
            <person name="Hayashi H."/>
            <person name="Huang P."/>
            <person name="Takada S."/>
            <person name="Obinata M."/>
            <person name="Inoue K."/>
            <person name="Shibuya M."/>
            <person name="Ebizuka Y."/>
        </authorList>
    </citation>
    <scope>TISSUE SPECIFICITY</scope>
    <scope>INDUCTION</scope>
    <scope>DEVELOPMENTAL STAGE</scope>
</reference>
<proteinExistence type="evidence at protein level"/>
<accession>Q9MB42</accession>
<keyword id="KW-0413">Isomerase</keyword>
<keyword id="KW-0677">Repeat</keyword>
<name>BAMS_GLYGL</name>